<name>RRF_ALBFT</name>
<evidence type="ECO:0000255" key="1">
    <source>
        <dbReference type="HAMAP-Rule" id="MF_00040"/>
    </source>
</evidence>
<proteinExistence type="inferred from homology"/>
<accession>Q21WY6</accession>
<reference key="1">
    <citation type="submission" date="2006-02" db="EMBL/GenBank/DDBJ databases">
        <title>Complete sequence of chromosome of Rhodoferax ferrireducens DSM 15236.</title>
        <authorList>
            <person name="Copeland A."/>
            <person name="Lucas S."/>
            <person name="Lapidus A."/>
            <person name="Barry K."/>
            <person name="Detter J.C."/>
            <person name="Glavina del Rio T."/>
            <person name="Hammon N."/>
            <person name="Israni S."/>
            <person name="Pitluck S."/>
            <person name="Brettin T."/>
            <person name="Bruce D."/>
            <person name="Han C."/>
            <person name="Tapia R."/>
            <person name="Gilna P."/>
            <person name="Kiss H."/>
            <person name="Schmutz J."/>
            <person name="Larimer F."/>
            <person name="Land M."/>
            <person name="Kyrpides N."/>
            <person name="Ivanova N."/>
            <person name="Richardson P."/>
        </authorList>
    </citation>
    <scope>NUCLEOTIDE SEQUENCE [LARGE SCALE GENOMIC DNA]</scope>
    <source>
        <strain>ATCC BAA-621 / DSM 15236 / T118</strain>
    </source>
</reference>
<keyword id="KW-0963">Cytoplasm</keyword>
<keyword id="KW-0648">Protein biosynthesis</keyword>
<keyword id="KW-1185">Reference proteome</keyword>
<feature type="chain" id="PRO_1000003245" description="Ribosome-recycling factor">
    <location>
        <begin position="1"/>
        <end position="186"/>
    </location>
</feature>
<dbReference type="EMBL" id="CP000267">
    <property type="protein sequence ID" value="ABD69717.1"/>
    <property type="molecule type" value="Genomic_DNA"/>
</dbReference>
<dbReference type="RefSeq" id="WP_011464285.1">
    <property type="nucleotide sequence ID" value="NC_007908.1"/>
</dbReference>
<dbReference type="SMR" id="Q21WY6"/>
<dbReference type="STRING" id="338969.Rfer_1992"/>
<dbReference type="KEGG" id="rfr:Rfer_1992"/>
<dbReference type="eggNOG" id="COG0233">
    <property type="taxonomic scope" value="Bacteria"/>
</dbReference>
<dbReference type="HOGENOM" id="CLU_073981_2_0_4"/>
<dbReference type="OrthoDB" id="9804006at2"/>
<dbReference type="Proteomes" id="UP000008332">
    <property type="component" value="Chromosome"/>
</dbReference>
<dbReference type="GO" id="GO:0005829">
    <property type="term" value="C:cytosol"/>
    <property type="evidence" value="ECO:0007669"/>
    <property type="project" value="GOC"/>
</dbReference>
<dbReference type="GO" id="GO:0043023">
    <property type="term" value="F:ribosomal large subunit binding"/>
    <property type="evidence" value="ECO:0007669"/>
    <property type="project" value="TreeGrafter"/>
</dbReference>
<dbReference type="GO" id="GO:0002184">
    <property type="term" value="P:cytoplasmic translational termination"/>
    <property type="evidence" value="ECO:0007669"/>
    <property type="project" value="TreeGrafter"/>
</dbReference>
<dbReference type="CDD" id="cd00520">
    <property type="entry name" value="RRF"/>
    <property type="match status" value="1"/>
</dbReference>
<dbReference type="FunFam" id="1.10.132.20:FF:000001">
    <property type="entry name" value="Ribosome-recycling factor"/>
    <property type="match status" value="1"/>
</dbReference>
<dbReference type="FunFam" id="3.30.1360.40:FF:000001">
    <property type="entry name" value="Ribosome-recycling factor"/>
    <property type="match status" value="1"/>
</dbReference>
<dbReference type="Gene3D" id="3.30.1360.40">
    <property type="match status" value="1"/>
</dbReference>
<dbReference type="Gene3D" id="1.10.132.20">
    <property type="entry name" value="Ribosome-recycling factor"/>
    <property type="match status" value="1"/>
</dbReference>
<dbReference type="HAMAP" id="MF_00040">
    <property type="entry name" value="RRF"/>
    <property type="match status" value="1"/>
</dbReference>
<dbReference type="InterPro" id="IPR002661">
    <property type="entry name" value="Ribosome_recyc_fac"/>
</dbReference>
<dbReference type="InterPro" id="IPR023584">
    <property type="entry name" value="Ribosome_recyc_fac_dom"/>
</dbReference>
<dbReference type="InterPro" id="IPR036191">
    <property type="entry name" value="RRF_sf"/>
</dbReference>
<dbReference type="NCBIfam" id="TIGR00496">
    <property type="entry name" value="frr"/>
    <property type="match status" value="1"/>
</dbReference>
<dbReference type="PANTHER" id="PTHR20982:SF3">
    <property type="entry name" value="MITOCHONDRIAL RIBOSOME RECYCLING FACTOR PSEUDO 1"/>
    <property type="match status" value="1"/>
</dbReference>
<dbReference type="PANTHER" id="PTHR20982">
    <property type="entry name" value="RIBOSOME RECYCLING FACTOR"/>
    <property type="match status" value="1"/>
</dbReference>
<dbReference type="Pfam" id="PF01765">
    <property type="entry name" value="RRF"/>
    <property type="match status" value="1"/>
</dbReference>
<dbReference type="SUPFAM" id="SSF55194">
    <property type="entry name" value="Ribosome recycling factor, RRF"/>
    <property type="match status" value="1"/>
</dbReference>
<gene>
    <name evidence="1" type="primary">frr</name>
    <name type="ordered locus">Rfer_1992</name>
</gene>
<sequence length="186" mass="20675">MTIAEIKNTVEGKMDQSIEAFKHNLTKIRTGRANPALLDTVHVDYYGAMLPISQVANVSLLDARTISVQPWEKGMGAKIEKAIRDSDLGLNPSSMGDLIRVPMPAMSEERRKELSKVVRGEGEGAKIAIRNLRRDANEAIRKAVKDKLASEDEQKRCETDIQKVTDRHVIVIDQLVAAKEQDIMAV</sequence>
<comment type="function">
    <text evidence="1">Responsible for the release of ribosomes from messenger RNA at the termination of protein biosynthesis. May increase the efficiency of translation by recycling ribosomes from one round of translation to another.</text>
</comment>
<comment type="subcellular location">
    <subcellularLocation>
        <location evidence="1">Cytoplasm</location>
    </subcellularLocation>
</comment>
<comment type="similarity">
    <text evidence="1">Belongs to the RRF family.</text>
</comment>
<organism>
    <name type="scientific">Albidiferax ferrireducens (strain ATCC BAA-621 / DSM 15236 / T118)</name>
    <name type="common">Rhodoferax ferrireducens</name>
    <dbReference type="NCBI Taxonomy" id="338969"/>
    <lineage>
        <taxon>Bacteria</taxon>
        <taxon>Pseudomonadati</taxon>
        <taxon>Pseudomonadota</taxon>
        <taxon>Betaproteobacteria</taxon>
        <taxon>Burkholderiales</taxon>
        <taxon>Comamonadaceae</taxon>
        <taxon>Rhodoferax</taxon>
    </lineage>
</organism>
<protein>
    <recommendedName>
        <fullName evidence="1">Ribosome-recycling factor</fullName>
        <shortName evidence="1">RRF</shortName>
    </recommendedName>
    <alternativeName>
        <fullName evidence="1">Ribosome-releasing factor</fullName>
    </alternativeName>
</protein>